<evidence type="ECO:0000255" key="1">
    <source>
        <dbReference type="HAMAP-Rule" id="MF_01371"/>
    </source>
</evidence>
<evidence type="ECO:0000305" key="2"/>
<organism>
    <name type="scientific">Pyrococcus abyssi (strain GE5 / Orsay)</name>
    <dbReference type="NCBI Taxonomy" id="272844"/>
    <lineage>
        <taxon>Archaea</taxon>
        <taxon>Methanobacteriati</taxon>
        <taxon>Methanobacteriota</taxon>
        <taxon>Thermococci</taxon>
        <taxon>Thermococcales</taxon>
        <taxon>Thermococcaceae</taxon>
        <taxon>Pyrococcus</taxon>
    </lineage>
</organism>
<keyword id="KW-0687">Ribonucleoprotein</keyword>
<keyword id="KW-0689">Ribosomal protein</keyword>
<feature type="chain" id="PRO_0000104627" description="Large ribosomal subunit protein uL30">
    <location>
        <begin position="1"/>
        <end position="155"/>
    </location>
</feature>
<protein>
    <recommendedName>
        <fullName evidence="1">Large ribosomal subunit protein uL30</fullName>
    </recommendedName>
    <alternativeName>
        <fullName evidence="2">50S ribosomal protein L30</fullName>
    </alternativeName>
</protein>
<proteinExistence type="inferred from homology"/>
<comment type="subunit">
    <text evidence="1">Part of the 50S ribosomal subunit.</text>
</comment>
<comment type="similarity">
    <text evidence="1">Belongs to the universal ribosomal protein uL30 family.</text>
</comment>
<accession>Q9V1V6</accession>
<accession>G8ZHV4</accession>
<gene>
    <name evidence="1" type="primary">rpl30</name>
    <name type="ordered locus">PYRAB03200</name>
    <name type="ORF">PAB2137</name>
</gene>
<sequence length="155" mass="17710">MAKLAVIRIRGRVNVKRPVRDTLAMLRLHRVNHCVIVDDTPSYLGMLQKAKDYITWGEINAETLAKLIRKRGRLIGNKPVTDEYVKEKLGMTIEEFAQKVINGEMSLKDLPNLKPVFRLHPPRGGFRGSKKRSFKEGGALGYRGEKINDLIERML</sequence>
<dbReference type="EMBL" id="AJ248284">
    <property type="protein sequence ID" value="CAB49242.1"/>
    <property type="molecule type" value="Genomic_DNA"/>
</dbReference>
<dbReference type="EMBL" id="HE613800">
    <property type="protein sequence ID" value="CCE69697.1"/>
    <property type="molecule type" value="Genomic_DNA"/>
</dbReference>
<dbReference type="PIR" id="C75145">
    <property type="entry name" value="C75145"/>
</dbReference>
<dbReference type="RefSeq" id="WP_010867442.1">
    <property type="nucleotide sequence ID" value="NC_000868.1"/>
</dbReference>
<dbReference type="SMR" id="Q9V1V6"/>
<dbReference type="STRING" id="272844.PAB2137"/>
<dbReference type="KEGG" id="pab:PAB2137"/>
<dbReference type="PATRIC" id="fig|272844.11.peg.341"/>
<dbReference type="eggNOG" id="arCOG04086">
    <property type="taxonomic scope" value="Archaea"/>
</dbReference>
<dbReference type="HOGENOM" id="CLU_055156_6_0_2"/>
<dbReference type="OrthoDB" id="6379at2157"/>
<dbReference type="PhylomeDB" id="Q9V1V6"/>
<dbReference type="Proteomes" id="UP000000810">
    <property type="component" value="Chromosome"/>
</dbReference>
<dbReference type="Proteomes" id="UP000009139">
    <property type="component" value="Chromosome"/>
</dbReference>
<dbReference type="GO" id="GO:0022625">
    <property type="term" value="C:cytosolic large ribosomal subunit"/>
    <property type="evidence" value="ECO:0007669"/>
    <property type="project" value="TreeGrafter"/>
</dbReference>
<dbReference type="GO" id="GO:0003723">
    <property type="term" value="F:RNA binding"/>
    <property type="evidence" value="ECO:0007669"/>
    <property type="project" value="TreeGrafter"/>
</dbReference>
<dbReference type="GO" id="GO:0003735">
    <property type="term" value="F:structural constituent of ribosome"/>
    <property type="evidence" value="ECO:0007669"/>
    <property type="project" value="InterPro"/>
</dbReference>
<dbReference type="GO" id="GO:0000463">
    <property type="term" value="P:maturation of LSU-rRNA from tricistronic rRNA transcript (SSU-rRNA, 5.8S rRNA, LSU-rRNA)"/>
    <property type="evidence" value="ECO:0007669"/>
    <property type="project" value="TreeGrafter"/>
</dbReference>
<dbReference type="GO" id="GO:0006412">
    <property type="term" value="P:translation"/>
    <property type="evidence" value="ECO:0007669"/>
    <property type="project" value="UniProtKB-UniRule"/>
</dbReference>
<dbReference type="CDD" id="cd01657">
    <property type="entry name" value="Ribosomal_L7_archeal_euk"/>
    <property type="match status" value="1"/>
</dbReference>
<dbReference type="FunFam" id="1.10.15.30:FF:000002">
    <property type="entry name" value="50S ribosomal protein L30"/>
    <property type="match status" value="1"/>
</dbReference>
<dbReference type="Gene3D" id="1.10.15.30">
    <property type="match status" value="1"/>
</dbReference>
<dbReference type="Gene3D" id="3.30.1390.20">
    <property type="entry name" value="Ribosomal protein L30, ferredoxin-like fold domain"/>
    <property type="match status" value="1"/>
</dbReference>
<dbReference type="HAMAP" id="MF_01371_A">
    <property type="entry name" value="Ribosomal_uL30_A"/>
    <property type="match status" value="1"/>
</dbReference>
<dbReference type="InterPro" id="IPR036919">
    <property type="entry name" value="Ribo_uL30_ferredoxin-like_sf"/>
</dbReference>
<dbReference type="InterPro" id="IPR039699">
    <property type="entry name" value="Ribosomal_uL30"/>
</dbReference>
<dbReference type="InterPro" id="IPR005997">
    <property type="entry name" value="Ribosomal_uL30_arc"/>
</dbReference>
<dbReference type="InterPro" id="IPR018038">
    <property type="entry name" value="Ribosomal_uL30_CS"/>
</dbReference>
<dbReference type="InterPro" id="IPR035808">
    <property type="entry name" value="Ribosomal_uL30_euk_arc"/>
</dbReference>
<dbReference type="InterPro" id="IPR016082">
    <property type="entry name" value="Ribosomal_uL30_ferredoxin-like"/>
</dbReference>
<dbReference type="NCBIfam" id="NF004711">
    <property type="entry name" value="PRK06049.1"/>
    <property type="match status" value="1"/>
</dbReference>
<dbReference type="NCBIfam" id="TIGR01309">
    <property type="entry name" value="uL30_arch"/>
    <property type="match status" value="1"/>
</dbReference>
<dbReference type="PANTHER" id="PTHR11524">
    <property type="entry name" value="60S RIBOSOMAL PROTEIN L7"/>
    <property type="match status" value="1"/>
</dbReference>
<dbReference type="PANTHER" id="PTHR11524:SF16">
    <property type="entry name" value="LARGE RIBOSOMAL SUBUNIT PROTEIN UL30"/>
    <property type="match status" value="1"/>
</dbReference>
<dbReference type="Pfam" id="PF00327">
    <property type="entry name" value="Ribosomal_L30"/>
    <property type="match status" value="1"/>
</dbReference>
<dbReference type="SUPFAM" id="SSF55129">
    <property type="entry name" value="Ribosomal protein L30p/L7e"/>
    <property type="match status" value="1"/>
</dbReference>
<dbReference type="PROSITE" id="PS00634">
    <property type="entry name" value="RIBOSOMAL_L30"/>
    <property type="match status" value="1"/>
</dbReference>
<name>RL30_PYRAB</name>
<reference key="1">
    <citation type="journal article" date="2003" name="Mol. Microbiol.">
        <title>An integrated analysis of the genome of the hyperthermophilic archaeon Pyrococcus abyssi.</title>
        <authorList>
            <person name="Cohen G.N."/>
            <person name="Barbe V."/>
            <person name="Flament D."/>
            <person name="Galperin M."/>
            <person name="Heilig R."/>
            <person name="Lecompte O."/>
            <person name="Poch O."/>
            <person name="Prieur D."/>
            <person name="Querellou J."/>
            <person name="Ripp R."/>
            <person name="Thierry J.-C."/>
            <person name="Van der Oost J."/>
            <person name="Weissenbach J."/>
            <person name="Zivanovic Y."/>
            <person name="Forterre P."/>
        </authorList>
    </citation>
    <scope>NUCLEOTIDE SEQUENCE [LARGE SCALE GENOMIC DNA]</scope>
    <source>
        <strain>GE5 / Orsay</strain>
    </source>
</reference>
<reference key="2">
    <citation type="journal article" date="2012" name="Curr. Microbiol.">
        <title>Re-annotation of two hyperthermophilic archaea Pyrococcus abyssi GE5 and Pyrococcus furiosus DSM 3638.</title>
        <authorList>
            <person name="Gao J."/>
            <person name="Wang J."/>
        </authorList>
    </citation>
    <scope>GENOME REANNOTATION</scope>
    <source>
        <strain>GE5 / Orsay</strain>
    </source>
</reference>